<keyword id="KW-1015">Disulfide bond</keyword>
<keyword id="KW-1170">Fusion of virus membrane with host endosomal membrane</keyword>
<keyword id="KW-1168">Fusion of virus membrane with host membrane</keyword>
<keyword id="KW-0325">Glycoprotein</keyword>
<keyword id="KW-0348">Hemagglutinin</keyword>
<keyword id="KW-1032">Host cell membrane</keyword>
<keyword id="KW-1043">Host membrane</keyword>
<keyword id="KW-0945">Host-virus interaction</keyword>
<keyword id="KW-0449">Lipoprotein</keyword>
<keyword id="KW-0472">Membrane</keyword>
<keyword id="KW-0564">Palmitate</keyword>
<keyword id="KW-0732">Signal</keyword>
<keyword id="KW-0812">Transmembrane</keyword>
<keyword id="KW-1161">Viral attachment to host cell</keyword>
<keyword id="KW-0261">Viral envelope protein</keyword>
<keyword id="KW-1162">Viral penetration into host cytoplasm</keyword>
<keyword id="KW-0946">Virion</keyword>
<keyword id="KW-1160">Virus entry into host cell</keyword>
<sequence length="362" mass="39235">MKAIIVLLMVVTSNADRICTGITSSNSPHVVKTATQGEVNVTGVIPLTTTPTKSHFANLKGTKTRGKLCPKCLNCTDLDVALARPKCTGTIPSAKASILHEVKPVTFGCFPIMHDRTKIRQLPNLLRGYEHIRLSTHNVINAETAPGGPYKIGTSRSCPNVTNGNGFFATMAWAVPKNDNNKTATNPLTVEVPYICTEGEDQITVWGFHSDNETQMVKLYGDSKPQKFTSSANGVTTHYVSQIGGFPNQAEDGGLPQSGRIVVDYMVQKSGKTGTITYQRGILLPQKVWCASGRSKVIKGSLPLIGEADCLHEKYGGLNKSKPYYTGEHAKAIGNCPIWVKTPLKLANGTKYRPPAKLLKER</sequence>
<comment type="function">
    <text>Binds to sialic acid-containing receptors on the cell surface, bringing about the attachment of the virus particle to the cell. Plays a major role in the determination of host range restriction and virulence. Class I viral fusion protein. Responsible for penetration of the virus into the cell cytoplasm by mediating the fusion of the membrane of the endocytosed virus particle with the endosomal membrane. Low pH in endosomes induce an irreversible conformational change in HA2, releasing the fusion hydrophobic peptide. Several trimers are required to form a competent fusion pore.</text>
</comment>
<comment type="subunit">
    <text>Homotrimer of disulfide-linked HA1-HA2.</text>
</comment>
<comment type="subcellular location">
    <subcellularLocation>
        <location evidence="3">Virion membrane</location>
        <topology evidence="3">Single-pass type I membrane protein</topology>
    </subcellularLocation>
    <subcellularLocation>
        <location>Host apical cell membrane</location>
        <topology>Single-pass type I membrane protein</topology>
    </subcellularLocation>
    <text>Targeted to the apical plasma membrane in epithelial polarized cells through a signal present in the transmembrane domain. Associated with glycosphingolipid- and cholesterol-enriched detergent-resistant lipid rafts.</text>
</comment>
<comment type="PTM">
    <text evidence="1">In natural infection, inactive HA is matured into HA1 and HA2 outside the cell by one or more trypsin-like, arginine-specific endoprotease secreted by the bronchial epithelial cells. One identified protease that may be involved in this process is secreted in lungs by club cells (By similarity).</text>
</comment>
<comment type="PTM">
    <text evidence="1">Palmitoylated.</text>
</comment>
<comment type="miscellaneous">
    <text>Major glycoprotein, comprises over 80% of the envelope proteins present in virus particle.</text>
</comment>
<comment type="miscellaneous">
    <text>The extent of infection into host organism is determined by HA. Influenza viruses bud from the apical surface of polarized epithelial cells (e.g. bronchial epithelial cells) into lumen of lungs and are therefore usually pneumotropic. The reason is that HA is cleaved by tryptase clara which is restricted to lungs. However, HAs of H5 and H7 pantropic avian viruses subtypes can be cleaved by furin and subtilisin-type enzymes, allowing the virus to grow in other organs than lungs.</text>
</comment>
<comment type="miscellaneous">
    <text>The influenza B genome consist of 8 RNA segments. Genetic variation of hemagglutinin and/or neuraminidase genes results in the emergence of new influenza strains. The mechanism of variation can be the result of point mutations or the result of genetic reassortment between segments of two different strains.</text>
</comment>
<comment type="similarity">
    <text evidence="3">Belongs to the influenza viruses hemagglutinin family.</text>
</comment>
<accession>Q67372</accession>
<evidence type="ECO:0000250" key="1"/>
<evidence type="ECO:0000255" key="2"/>
<evidence type="ECO:0000305" key="3"/>
<name>HEMA_INBIN</name>
<dbReference type="EMBL" id="M65168">
    <property type="protein sequence ID" value="AAA43706.1"/>
    <property type="molecule type" value="Genomic_RNA"/>
</dbReference>
<dbReference type="PIR" id="JQ1904">
    <property type="entry name" value="JQ1904"/>
</dbReference>
<dbReference type="SMR" id="Q67372"/>
<dbReference type="GlyCosmos" id="Q67372">
    <property type="glycosylation" value="7 sites, No reported glycans"/>
</dbReference>
<dbReference type="GO" id="GO:0020002">
    <property type="term" value="C:host cell plasma membrane"/>
    <property type="evidence" value="ECO:0007669"/>
    <property type="project" value="UniProtKB-SubCell"/>
</dbReference>
<dbReference type="GO" id="GO:0016020">
    <property type="term" value="C:membrane"/>
    <property type="evidence" value="ECO:0007669"/>
    <property type="project" value="UniProtKB-KW"/>
</dbReference>
<dbReference type="GO" id="GO:0019031">
    <property type="term" value="C:viral envelope"/>
    <property type="evidence" value="ECO:0007669"/>
    <property type="project" value="UniProtKB-KW"/>
</dbReference>
<dbReference type="GO" id="GO:0055036">
    <property type="term" value="C:virion membrane"/>
    <property type="evidence" value="ECO:0007669"/>
    <property type="project" value="UniProtKB-SubCell"/>
</dbReference>
<dbReference type="GO" id="GO:0046789">
    <property type="term" value="F:host cell surface receptor binding"/>
    <property type="evidence" value="ECO:0007669"/>
    <property type="project" value="InterPro"/>
</dbReference>
<dbReference type="GO" id="GO:0039654">
    <property type="term" value="P:fusion of virus membrane with host endosome membrane"/>
    <property type="evidence" value="ECO:0007669"/>
    <property type="project" value="UniProtKB-KW"/>
</dbReference>
<dbReference type="GO" id="GO:0019064">
    <property type="term" value="P:fusion of virus membrane with host plasma membrane"/>
    <property type="evidence" value="ECO:0007669"/>
    <property type="project" value="InterPro"/>
</dbReference>
<dbReference type="GO" id="GO:0046718">
    <property type="term" value="P:symbiont entry into host cell"/>
    <property type="evidence" value="ECO:0007669"/>
    <property type="project" value="UniProtKB-KW"/>
</dbReference>
<dbReference type="GO" id="GO:0019062">
    <property type="term" value="P:virion attachment to host cell"/>
    <property type="evidence" value="ECO:0007669"/>
    <property type="project" value="UniProtKB-KW"/>
</dbReference>
<dbReference type="Gene3D" id="3.90.209.20">
    <property type="match status" value="1"/>
</dbReference>
<dbReference type="Gene3D" id="2.10.77.10">
    <property type="entry name" value="Hemagglutinin Chain A, Domain 2"/>
    <property type="match status" value="1"/>
</dbReference>
<dbReference type="InterPro" id="IPR008980">
    <property type="entry name" value="Capsid_hemagglutn"/>
</dbReference>
<dbReference type="InterPro" id="IPR013828">
    <property type="entry name" value="Hemagglutn_HA1_a/b_dom_sf"/>
</dbReference>
<dbReference type="InterPro" id="IPR001364">
    <property type="entry name" value="Hemagglutn_influenz_A/B"/>
</dbReference>
<dbReference type="Pfam" id="PF00509">
    <property type="entry name" value="Hemagglutinin"/>
    <property type="match status" value="1"/>
</dbReference>
<dbReference type="SUPFAM" id="SSF49818">
    <property type="entry name" value="Viral protein domain"/>
    <property type="match status" value="1"/>
</dbReference>
<organismHost>
    <name type="scientific">Homo sapiens</name>
    <name type="common">Human</name>
    <dbReference type="NCBI Taxonomy" id="9606"/>
</organismHost>
<proteinExistence type="inferred from homology"/>
<organism>
    <name type="scientific">Influenza B virus (strain B/India/3/1989)</name>
    <dbReference type="NCBI Taxonomy" id="291806"/>
    <lineage>
        <taxon>Viruses</taxon>
        <taxon>Riboviria</taxon>
        <taxon>Orthornavirae</taxon>
        <taxon>Negarnaviricota</taxon>
        <taxon>Polyploviricotina</taxon>
        <taxon>Insthoviricetes</taxon>
        <taxon>Articulavirales</taxon>
        <taxon>Orthomyxoviridae</taxon>
        <taxon>Betainfluenzavirus</taxon>
        <taxon>Betainfluenzavirus influenzae</taxon>
        <taxon>Influenza B virus</taxon>
    </lineage>
</organism>
<protein>
    <recommendedName>
        <fullName>Hemagglutinin</fullName>
    </recommendedName>
    <component>
        <recommendedName>
            <fullName>Hemagglutinin HA1 chain</fullName>
        </recommendedName>
    </component>
</protein>
<gene>
    <name type="primary">HA</name>
</gene>
<feature type="signal peptide" evidence="2">
    <location>
        <begin position="1"/>
        <end position="15"/>
    </location>
</feature>
<feature type="chain" id="PRO_0000039113" description="Hemagglutinin HA1 chain" evidence="1">
    <location>
        <begin position="16"/>
        <end position="362"/>
    </location>
</feature>
<feature type="glycosylation site" description="N-linked (GlcNAc...) asparagine; by host" evidence="2">
    <location>
        <position position="40"/>
    </location>
</feature>
<feature type="glycosylation site" description="N-linked (GlcNAc...) asparagine; by host" evidence="2">
    <location>
        <position position="74"/>
    </location>
</feature>
<feature type="glycosylation site" description="N-linked (GlcNAc...) asparagine; by host" evidence="2">
    <location>
        <position position="160"/>
    </location>
</feature>
<feature type="glycosylation site" description="N-linked (GlcNAc...) asparagine; by host" evidence="2">
    <location>
        <position position="181"/>
    </location>
</feature>
<feature type="glycosylation site" description="N-linked (GlcNAc...) asparagine; by host" evidence="2">
    <location>
        <position position="212"/>
    </location>
</feature>
<feature type="glycosylation site" description="N-linked (GlcNAc...) asparagine; by host" evidence="2">
    <location>
        <position position="319"/>
    </location>
</feature>
<feature type="glycosylation site" description="N-linked (GlcNAc...) asparagine; by host" evidence="2">
    <location>
        <position position="348"/>
    </location>
</feature>
<feature type="non-terminal residue">
    <location>
        <position position="362"/>
    </location>
</feature>
<reference key="1">
    <citation type="journal article" date="1992" name="J. Gen. Virol.">
        <title>Antigenic and genetic characterization of the haemagglutinins of recent cocirculating strains of influenza B virus.</title>
        <authorList>
            <person name="Rota P.A."/>
            <person name="Hemphill M."/>
            <person name="Whistler T."/>
            <person name="Regnery H.L."/>
            <person name="Kendal A.P."/>
        </authorList>
    </citation>
    <scope>NUCLEOTIDE SEQUENCE [GENOMIC RNA]</scope>
</reference>